<evidence type="ECO:0000250" key="1"/>
<evidence type="ECO:0000250" key="2">
    <source>
        <dbReference type="UniProtKB" id="P46995"/>
    </source>
</evidence>
<evidence type="ECO:0000255" key="3">
    <source>
        <dbReference type="PROSITE-ProRule" id="PRU00155"/>
    </source>
</evidence>
<evidence type="ECO:0000255" key="4">
    <source>
        <dbReference type="PROSITE-ProRule" id="PRU00190"/>
    </source>
</evidence>
<evidence type="ECO:0000255" key="5">
    <source>
        <dbReference type="PROSITE-ProRule" id="PRU00224"/>
    </source>
</evidence>
<evidence type="ECO:0000255" key="6">
    <source>
        <dbReference type="PROSITE-ProRule" id="PRU00562"/>
    </source>
</evidence>
<evidence type="ECO:0000255" key="7">
    <source>
        <dbReference type="PROSITE-ProRule" id="PRU00901"/>
    </source>
</evidence>
<evidence type="ECO:0000256" key="8">
    <source>
        <dbReference type="SAM" id="MobiDB-lite"/>
    </source>
</evidence>
<accession>Q1DU03</accession>
<accession>J3K868</accession>
<gene>
    <name type="primary">SET2</name>
    <name type="ORF">CIMG_06210</name>
</gene>
<name>SET2_COCIM</name>
<feature type="chain" id="PRO_0000269785" description="Histone-lysine N-methyltransferase, H3 lysine-36 specific">
    <location>
        <begin position="1"/>
        <end position="1011"/>
    </location>
</feature>
<feature type="domain" description="AWS" evidence="6">
    <location>
        <begin position="146"/>
        <end position="201"/>
    </location>
</feature>
<feature type="domain" description="SET" evidence="4">
    <location>
        <begin position="203"/>
        <end position="320"/>
    </location>
</feature>
<feature type="domain" description="Post-SET" evidence="3">
    <location>
        <begin position="327"/>
        <end position="343"/>
    </location>
</feature>
<feature type="domain" description="WW" evidence="5">
    <location>
        <begin position="604"/>
        <end position="635"/>
    </location>
</feature>
<feature type="region of interest" description="Disordered" evidence="8">
    <location>
        <begin position="1"/>
        <end position="118"/>
    </location>
</feature>
<feature type="region of interest" description="Disordered" evidence="8">
    <location>
        <begin position="527"/>
        <end position="604"/>
    </location>
</feature>
<feature type="region of interest" description="Disordered" evidence="8">
    <location>
        <begin position="630"/>
        <end position="650"/>
    </location>
</feature>
<feature type="region of interest" description="Disordered" evidence="8">
    <location>
        <begin position="665"/>
        <end position="697"/>
    </location>
</feature>
<feature type="region of interest" description="Disordered" evidence="8">
    <location>
        <begin position="782"/>
        <end position="1011"/>
    </location>
</feature>
<feature type="compositionally biased region" description="Basic and acidic residues" evidence="8">
    <location>
        <begin position="10"/>
        <end position="27"/>
    </location>
</feature>
<feature type="compositionally biased region" description="Basic and acidic residues" evidence="8">
    <location>
        <begin position="74"/>
        <end position="84"/>
    </location>
</feature>
<feature type="compositionally biased region" description="Basic and acidic residues" evidence="8">
    <location>
        <begin position="538"/>
        <end position="551"/>
    </location>
</feature>
<feature type="compositionally biased region" description="Basic and acidic residues" evidence="8">
    <location>
        <begin position="684"/>
        <end position="697"/>
    </location>
</feature>
<feature type="compositionally biased region" description="Basic and acidic residues" evidence="8">
    <location>
        <begin position="782"/>
        <end position="793"/>
    </location>
</feature>
<feature type="compositionally biased region" description="Polar residues" evidence="8">
    <location>
        <begin position="798"/>
        <end position="815"/>
    </location>
</feature>
<feature type="compositionally biased region" description="Acidic residues" evidence="8">
    <location>
        <begin position="825"/>
        <end position="844"/>
    </location>
</feature>
<feature type="compositionally biased region" description="Pro residues" evidence="8">
    <location>
        <begin position="884"/>
        <end position="893"/>
    </location>
</feature>
<feature type="compositionally biased region" description="Basic and acidic residues" evidence="8">
    <location>
        <begin position="901"/>
        <end position="914"/>
    </location>
</feature>
<feature type="compositionally biased region" description="Pro residues" evidence="8">
    <location>
        <begin position="935"/>
        <end position="948"/>
    </location>
</feature>
<feature type="compositionally biased region" description="Acidic residues" evidence="8">
    <location>
        <begin position="953"/>
        <end position="971"/>
    </location>
</feature>
<feature type="compositionally biased region" description="Polar residues" evidence="8">
    <location>
        <begin position="983"/>
        <end position="1002"/>
    </location>
</feature>
<reference key="1">
    <citation type="journal article" date="2009" name="Genome Res.">
        <title>Comparative genomic analyses of the human fungal pathogens Coccidioides and their relatives.</title>
        <authorList>
            <person name="Sharpton T.J."/>
            <person name="Stajich J.E."/>
            <person name="Rounsley S.D."/>
            <person name="Gardner M.J."/>
            <person name="Wortman J.R."/>
            <person name="Jordar V.S."/>
            <person name="Maiti R."/>
            <person name="Kodira C.D."/>
            <person name="Neafsey D.E."/>
            <person name="Zeng Q."/>
            <person name="Hung C.-Y."/>
            <person name="McMahan C."/>
            <person name="Muszewska A."/>
            <person name="Grynberg M."/>
            <person name="Mandel M.A."/>
            <person name="Kellner E.M."/>
            <person name="Barker B.M."/>
            <person name="Galgiani J.N."/>
            <person name="Orbach M.J."/>
            <person name="Kirkland T.N."/>
            <person name="Cole G.T."/>
            <person name="Henn M.R."/>
            <person name="Birren B.W."/>
            <person name="Taylor J.W."/>
        </authorList>
    </citation>
    <scope>NUCLEOTIDE SEQUENCE [LARGE SCALE GENOMIC DNA]</scope>
    <source>
        <strain>RS</strain>
    </source>
</reference>
<reference key="2">
    <citation type="journal article" date="2010" name="Genome Res.">
        <title>Population genomic sequencing of Coccidioides fungi reveals recent hybridization and transposon control.</title>
        <authorList>
            <person name="Neafsey D.E."/>
            <person name="Barker B.M."/>
            <person name="Sharpton T.J."/>
            <person name="Stajich J.E."/>
            <person name="Park D.J."/>
            <person name="Whiston E."/>
            <person name="Hung C.-Y."/>
            <person name="McMahan C."/>
            <person name="White J."/>
            <person name="Sykes S."/>
            <person name="Heiman D."/>
            <person name="Young S."/>
            <person name="Zeng Q."/>
            <person name="Abouelleil A."/>
            <person name="Aftuck L."/>
            <person name="Bessette D."/>
            <person name="Brown A."/>
            <person name="FitzGerald M."/>
            <person name="Lui A."/>
            <person name="Macdonald J.P."/>
            <person name="Priest M."/>
            <person name="Orbach M.J."/>
            <person name="Galgiani J.N."/>
            <person name="Kirkland T.N."/>
            <person name="Cole G.T."/>
            <person name="Birren B.W."/>
            <person name="Henn M.R."/>
            <person name="Taylor J.W."/>
            <person name="Rounsley S.D."/>
        </authorList>
    </citation>
    <scope>GENOME REANNOTATION</scope>
    <source>
        <strain>RS</strain>
    </source>
</reference>
<dbReference type="EC" id="2.1.1.359" evidence="2"/>
<dbReference type="EMBL" id="GG704912">
    <property type="protein sequence ID" value="EAS30731.3"/>
    <property type="molecule type" value="Genomic_DNA"/>
</dbReference>
<dbReference type="RefSeq" id="XP_001242314.2">
    <property type="nucleotide sequence ID" value="XM_001242313.2"/>
</dbReference>
<dbReference type="SMR" id="Q1DU03"/>
<dbReference type="FunCoup" id="Q1DU03">
    <property type="interactions" value="96"/>
</dbReference>
<dbReference type="STRING" id="246410.Q1DU03"/>
<dbReference type="GeneID" id="4562087"/>
<dbReference type="KEGG" id="cim:CIMG_06210"/>
<dbReference type="VEuPathDB" id="FungiDB:CIMG_06210"/>
<dbReference type="InParanoid" id="Q1DU03"/>
<dbReference type="OMA" id="AQSQPCY"/>
<dbReference type="OrthoDB" id="422362at2759"/>
<dbReference type="Proteomes" id="UP000001261">
    <property type="component" value="Unassembled WGS sequence"/>
</dbReference>
<dbReference type="GO" id="GO:0005694">
    <property type="term" value="C:chromosome"/>
    <property type="evidence" value="ECO:0007669"/>
    <property type="project" value="UniProtKB-SubCell"/>
</dbReference>
<dbReference type="GO" id="GO:0005634">
    <property type="term" value="C:nucleus"/>
    <property type="evidence" value="ECO:0007669"/>
    <property type="project" value="UniProtKB-SubCell"/>
</dbReference>
<dbReference type="GO" id="GO:0140955">
    <property type="term" value="F:histone H3K36 trimethyltransferase activity"/>
    <property type="evidence" value="ECO:0007669"/>
    <property type="project" value="UniProtKB-EC"/>
</dbReference>
<dbReference type="GO" id="GO:0032259">
    <property type="term" value="P:methylation"/>
    <property type="evidence" value="ECO:0007669"/>
    <property type="project" value="UniProtKB-KW"/>
</dbReference>
<dbReference type="GO" id="GO:0006355">
    <property type="term" value="P:regulation of DNA-templated transcription"/>
    <property type="evidence" value="ECO:0007669"/>
    <property type="project" value="InterPro"/>
</dbReference>
<dbReference type="CDD" id="cd19172">
    <property type="entry name" value="SET_SETD2"/>
    <property type="match status" value="1"/>
</dbReference>
<dbReference type="CDD" id="cd00201">
    <property type="entry name" value="WW"/>
    <property type="match status" value="1"/>
</dbReference>
<dbReference type="FunFam" id="1.10.1740.100:FF:000002">
    <property type="entry name" value="Histone-lysine N-methyltransferase"/>
    <property type="match status" value="1"/>
</dbReference>
<dbReference type="FunFam" id="2.170.270.10:FF:000033">
    <property type="entry name" value="Histone-lysine N-methyltransferase"/>
    <property type="match status" value="1"/>
</dbReference>
<dbReference type="Gene3D" id="2.20.70.10">
    <property type="match status" value="1"/>
</dbReference>
<dbReference type="Gene3D" id="2.170.270.10">
    <property type="entry name" value="SET domain"/>
    <property type="match status" value="1"/>
</dbReference>
<dbReference type="Gene3D" id="1.10.1740.100">
    <property type="entry name" value="Set2, Rpb1 interacting domain"/>
    <property type="match status" value="1"/>
</dbReference>
<dbReference type="InterPro" id="IPR006560">
    <property type="entry name" value="AWS_dom"/>
</dbReference>
<dbReference type="InterPro" id="IPR003616">
    <property type="entry name" value="Post-SET_dom"/>
</dbReference>
<dbReference type="InterPro" id="IPR025788">
    <property type="entry name" value="Set2_fungi"/>
</dbReference>
<dbReference type="InterPro" id="IPR050777">
    <property type="entry name" value="SET2_Histone-Lys_MeTrsfase"/>
</dbReference>
<dbReference type="InterPro" id="IPR001214">
    <property type="entry name" value="SET_dom"/>
</dbReference>
<dbReference type="InterPro" id="IPR046341">
    <property type="entry name" value="SET_dom_sf"/>
</dbReference>
<dbReference type="InterPro" id="IPR044437">
    <property type="entry name" value="SETD2/Set2_SET"/>
</dbReference>
<dbReference type="InterPro" id="IPR013257">
    <property type="entry name" value="SRI"/>
</dbReference>
<dbReference type="InterPro" id="IPR038190">
    <property type="entry name" value="SRI_sf"/>
</dbReference>
<dbReference type="InterPro" id="IPR035441">
    <property type="entry name" value="TFIIS/LEDGF_dom_sf"/>
</dbReference>
<dbReference type="InterPro" id="IPR017923">
    <property type="entry name" value="TFIIS_N"/>
</dbReference>
<dbReference type="InterPro" id="IPR001202">
    <property type="entry name" value="WW_dom"/>
</dbReference>
<dbReference type="InterPro" id="IPR036020">
    <property type="entry name" value="WW_dom_sf"/>
</dbReference>
<dbReference type="PANTHER" id="PTHR22884">
    <property type="entry name" value="SET DOMAIN PROTEINS"/>
    <property type="match status" value="1"/>
</dbReference>
<dbReference type="Pfam" id="PF17907">
    <property type="entry name" value="AWS"/>
    <property type="match status" value="1"/>
</dbReference>
<dbReference type="Pfam" id="PF08711">
    <property type="entry name" value="Med26"/>
    <property type="match status" value="1"/>
</dbReference>
<dbReference type="Pfam" id="PF00856">
    <property type="entry name" value="SET"/>
    <property type="match status" value="1"/>
</dbReference>
<dbReference type="Pfam" id="PF08236">
    <property type="entry name" value="SRI"/>
    <property type="match status" value="1"/>
</dbReference>
<dbReference type="SMART" id="SM00570">
    <property type="entry name" value="AWS"/>
    <property type="match status" value="1"/>
</dbReference>
<dbReference type="SMART" id="SM00508">
    <property type="entry name" value="PostSET"/>
    <property type="match status" value="1"/>
</dbReference>
<dbReference type="SMART" id="SM00317">
    <property type="entry name" value="SET"/>
    <property type="match status" value="1"/>
</dbReference>
<dbReference type="SMART" id="SM00456">
    <property type="entry name" value="WW"/>
    <property type="match status" value="1"/>
</dbReference>
<dbReference type="SUPFAM" id="SSF47676">
    <property type="entry name" value="Conserved domain common to transcription factors TFIIS, elongin A, CRSP70"/>
    <property type="match status" value="1"/>
</dbReference>
<dbReference type="SUPFAM" id="SSF82199">
    <property type="entry name" value="SET domain"/>
    <property type="match status" value="1"/>
</dbReference>
<dbReference type="SUPFAM" id="SSF51045">
    <property type="entry name" value="WW domain"/>
    <property type="match status" value="1"/>
</dbReference>
<dbReference type="PROSITE" id="PS51215">
    <property type="entry name" value="AWS"/>
    <property type="match status" value="1"/>
</dbReference>
<dbReference type="PROSITE" id="PS50868">
    <property type="entry name" value="POST_SET"/>
    <property type="match status" value="1"/>
</dbReference>
<dbReference type="PROSITE" id="PS51568">
    <property type="entry name" value="SAM_MT43_SET2_1"/>
    <property type="match status" value="1"/>
</dbReference>
<dbReference type="PROSITE" id="PS50280">
    <property type="entry name" value="SET"/>
    <property type="match status" value="1"/>
</dbReference>
<dbReference type="PROSITE" id="PS01159">
    <property type="entry name" value="WW_DOMAIN_1"/>
    <property type="match status" value="1"/>
</dbReference>
<dbReference type="PROSITE" id="PS50020">
    <property type="entry name" value="WW_DOMAIN_2"/>
    <property type="match status" value="1"/>
</dbReference>
<proteinExistence type="inferred from homology"/>
<comment type="function">
    <text evidence="2">Histone methyltransferase that trimethylates histone H3 'Lys-36' forming H3K36me3. Involved in transcription elongation as well as in transcription repression.</text>
</comment>
<comment type="catalytic activity">
    <reaction evidence="2 7">
        <text>L-lysyl(36)-[histone H3] + 3 S-adenosyl-L-methionine = N(6),N(6),N(6)-trimethyl-L-lysyl(36)-[histone H3] + 3 S-adenosyl-L-homocysteine + 3 H(+)</text>
        <dbReference type="Rhea" id="RHEA:60324"/>
        <dbReference type="Rhea" id="RHEA-COMP:9785"/>
        <dbReference type="Rhea" id="RHEA-COMP:15536"/>
        <dbReference type="ChEBI" id="CHEBI:15378"/>
        <dbReference type="ChEBI" id="CHEBI:29969"/>
        <dbReference type="ChEBI" id="CHEBI:57856"/>
        <dbReference type="ChEBI" id="CHEBI:59789"/>
        <dbReference type="ChEBI" id="CHEBI:61961"/>
        <dbReference type="EC" id="2.1.1.359"/>
    </reaction>
</comment>
<comment type="subcellular location">
    <subcellularLocation>
        <location evidence="1">Nucleus</location>
    </subcellularLocation>
    <subcellularLocation>
        <location evidence="1">Chromosome</location>
    </subcellularLocation>
</comment>
<comment type="domain">
    <text evidence="1">The AWS and SET domains are necessary for transcription repression.</text>
</comment>
<comment type="similarity">
    <text evidence="7">Belongs to the class V-like SAM-binding methyltransferase superfamily. Histone-lysine methyltransferase family. SET2 subfamily.</text>
</comment>
<protein>
    <recommendedName>
        <fullName>Histone-lysine N-methyltransferase, H3 lysine-36 specific</fullName>
        <ecNumber evidence="2">2.1.1.359</ecNumber>
    </recommendedName>
    <alternativeName>
        <fullName>SET domain-containing protein 2</fullName>
    </alternativeName>
</protein>
<sequence length="1011" mass="113904">MAGHDDEEARIETVKDAVTDMKLERQSSTESVAPNGILDTITPKDEPNGHLSSKPSTPSLKPPKSRSRSSNSLAKDEVPEEKVGGDITIKQEPGQPPKLARSASQKLPPRAAPLFTDLPDKTTEATSTFQLMEVCTYANKYLGYTEHAMDCDCAEEWDAATCRNTACGEDSDCINRATKMECFGDCGCGDSCQNQRFQRREYAKVSVIKTEKKGYGLRADCDLRPNEFIFEYIGEVINEPQFRRRMIQYDEEGIKHFYFMSLNKGEFVDATKKGNLGRFCNHSCNPNCYVDKWVVGEKLRMGIFAERYIKAGEELVFNYNVDRYGADPQPCYCGEPNCTGFIGGKTQTERATKLSHATIEALGIDDPDGWDTAVARRPRKKKAGEDDEEYVDSLQPKSLDENGVTKVMAALMQCKEKWIAVKLLGRIQRCEDERVRHRVVRMHGYQILNSQLNTWKDDFNVVLQILDILDKFPRLTRNKIIDSKIEGTVSPLQECDDERVAEKAKALLEIWSALEVGYRIPRMKRDPAAVNNTPTANHYERRETAKDDRKPNSSKSRSRSRSRSRSVDVTRNAPRGPAALTRGGGKGHMHSYRPGQRPFRRPFNPLPKGWFAAESNGRTYYYSATGETTWSRPTAPAVQPPPPPKRESKEKTLQDIIDGIMNAKENTPKAKDKSATPATPADAKIPEKKEHKEKWRSYSEEKQKKLYENTLFPHVKYIVDKFKHKLPKDDLKRYAKEVAKKLVNSDFKNNRVEDPTKISDKQVKQVKKYCKEYFDKAVAKHRAYEEKKAERKSKGSVKATTSATIDKAETTSTKAPPQFDGAAETGDEDSDVQLSDAEYEDGQEESSHHSGLKRKRTDDEDFENDHENGGVSPTKRQRSASLPIIPPPPPPMSPSNLVLDDGSREALKRQRTEGAEDDEYGDSTISSGKRQRSETPPPPPPPPPPADIPPENIESENENDKDQEELQDYDVQEANWGKEDNIAIQSPSHSPFPAQSISNHSNTARETDSHS</sequence>
<keyword id="KW-0158">Chromosome</keyword>
<keyword id="KW-0489">Methyltransferase</keyword>
<keyword id="KW-0539">Nucleus</keyword>
<keyword id="KW-1185">Reference proteome</keyword>
<keyword id="KW-0678">Repressor</keyword>
<keyword id="KW-0949">S-adenosyl-L-methionine</keyword>
<keyword id="KW-0804">Transcription</keyword>
<keyword id="KW-0805">Transcription regulation</keyword>
<keyword id="KW-0808">Transferase</keyword>
<organism>
    <name type="scientific">Coccidioides immitis (strain RS)</name>
    <name type="common">Valley fever fungus</name>
    <dbReference type="NCBI Taxonomy" id="246410"/>
    <lineage>
        <taxon>Eukaryota</taxon>
        <taxon>Fungi</taxon>
        <taxon>Dikarya</taxon>
        <taxon>Ascomycota</taxon>
        <taxon>Pezizomycotina</taxon>
        <taxon>Eurotiomycetes</taxon>
        <taxon>Eurotiomycetidae</taxon>
        <taxon>Onygenales</taxon>
        <taxon>Onygenaceae</taxon>
        <taxon>Coccidioides</taxon>
    </lineage>
</organism>